<dbReference type="EC" id="2.1.1.297" evidence="2"/>
<dbReference type="EMBL" id="CU329670">
    <property type="protein sequence ID" value="CAB16250.1"/>
    <property type="molecule type" value="Genomic_DNA"/>
</dbReference>
<dbReference type="PIR" id="T38493">
    <property type="entry name" value="T38493"/>
</dbReference>
<dbReference type="RefSeq" id="NP_594983.1">
    <property type="nucleotide sequence ID" value="NM_001020414.2"/>
</dbReference>
<dbReference type="SMR" id="O14028"/>
<dbReference type="BioGRID" id="279150">
    <property type="interactions" value="2"/>
</dbReference>
<dbReference type="FunCoup" id="O14028">
    <property type="interactions" value="10"/>
</dbReference>
<dbReference type="STRING" id="284812.O14028"/>
<dbReference type="PaxDb" id="4896-SPAC29B12.05c.1"/>
<dbReference type="EnsemblFungi" id="SPAC29B12.05c.1">
    <property type="protein sequence ID" value="SPAC29B12.05c.1:pep"/>
    <property type="gene ID" value="SPAC29B12.05c"/>
</dbReference>
<dbReference type="GeneID" id="2542697"/>
<dbReference type="KEGG" id="spo:2542697"/>
<dbReference type="PomBase" id="SPAC29B12.05c">
    <property type="gene designation" value="mtq1"/>
</dbReference>
<dbReference type="VEuPathDB" id="FungiDB:SPAC29B12.05c"/>
<dbReference type="eggNOG" id="KOG2904">
    <property type="taxonomic scope" value="Eukaryota"/>
</dbReference>
<dbReference type="HOGENOM" id="CLU_018398_0_2_1"/>
<dbReference type="InParanoid" id="O14028"/>
<dbReference type="OMA" id="TFHELIN"/>
<dbReference type="PhylomeDB" id="O14028"/>
<dbReference type="PRO" id="PR:O14028"/>
<dbReference type="Proteomes" id="UP000002485">
    <property type="component" value="Chromosome I"/>
</dbReference>
<dbReference type="GO" id="GO:0005737">
    <property type="term" value="C:cytoplasm"/>
    <property type="evidence" value="ECO:0007005"/>
    <property type="project" value="PomBase"/>
</dbReference>
<dbReference type="GO" id="GO:0005759">
    <property type="term" value="C:mitochondrial matrix"/>
    <property type="evidence" value="ECO:0000305"/>
    <property type="project" value="PomBase"/>
</dbReference>
<dbReference type="GO" id="GO:0102559">
    <property type="term" value="F:protein-(glutamine-N5) methyltransferase activity"/>
    <property type="evidence" value="ECO:0007669"/>
    <property type="project" value="UniProtKB-EC"/>
</dbReference>
<dbReference type="GO" id="GO:0036009">
    <property type="term" value="F:protein-glutamine N-methyltransferase activity"/>
    <property type="evidence" value="ECO:0000250"/>
    <property type="project" value="PomBase"/>
</dbReference>
<dbReference type="GO" id="GO:0032259">
    <property type="term" value="P:methylation"/>
    <property type="evidence" value="ECO:0007669"/>
    <property type="project" value="UniProtKB-KW"/>
</dbReference>
<dbReference type="GO" id="GO:0070126">
    <property type="term" value="P:mitochondrial translational termination"/>
    <property type="evidence" value="ECO:0000305"/>
    <property type="project" value="PomBase"/>
</dbReference>
<dbReference type="GO" id="GO:0006415">
    <property type="term" value="P:translational termination"/>
    <property type="evidence" value="ECO:0000318"/>
    <property type="project" value="GO_Central"/>
</dbReference>
<dbReference type="CDD" id="cd02440">
    <property type="entry name" value="AdoMet_MTases"/>
    <property type="match status" value="1"/>
</dbReference>
<dbReference type="Gene3D" id="3.40.50.150">
    <property type="entry name" value="Vaccinia Virus protein VP39"/>
    <property type="match status" value="1"/>
</dbReference>
<dbReference type="InterPro" id="IPR004556">
    <property type="entry name" value="HemK-like"/>
</dbReference>
<dbReference type="InterPro" id="IPR050320">
    <property type="entry name" value="N5-glutamine_MTase"/>
</dbReference>
<dbReference type="InterPro" id="IPR029063">
    <property type="entry name" value="SAM-dependent_MTases_sf"/>
</dbReference>
<dbReference type="InterPro" id="IPR007848">
    <property type="entry name" value="Small_mtfrase_dom"/>
</dbReference>
<dbReference type="NCBIfam" id="TIGR00536">
    <property type="entry name" value="hemK_fam"/>
    <property type="match status" value="1"/>
</dbReference>
<dbReference type="PANTHER" id="PTHR18895">
    <property type="entry name" value="HEMK METHYLTRANSFERASE"/>
    <property type="match status" value="1"/>
</dbReference>
<dbReference type="PANTHER" id="PTHR18895:SF74">
    <property type="entry name" value="MTRF1L RELEASE FACTOR GLUTAMINE METHYLTRANSFERASE"/>
    <property type="match status" value="1"/>
</dbReference>
<dbReference type="Pfam" id="PF05175">
    <property type="entry name" value="MTS"/>
    <property type="match status" value="1"/>
</dbReference>
<dbReference type="SUPFAM" id="SSF53335">
    <property type="entry name" value="S-adenosyl-L-methionine-dependent methyltransferases"/>
    <property type="match status" value="1"/>
</dbReference>
<protein>
    <recommendedName>
        <fullName>Probable MRF1 mitochondrial N(5)-glutamine methyltransferase mtq1</fullName>
        <ecNumber evidence="2">2.1.1.297</ecNumber>
    </recommendedName>
</protein>
<organism>
    <name type="scientific">Schizosaccharomyces pombe (strain 972 / ATCC 24843)</name>
    <name type="common">Fission yeast</name>
    <dbReference type="NCBI Taxonomy" id="284812"/>
    <lineage>
        <taxon>Eukaryota</taxon>
        <taxon>Fungi</taxon>
        <taxon>Dikarya</taxon>
        <taxon>Ascomycota</taxon>
        <taxon>Taphrinomycotina</taxon>
        <taxon>Schizosaccharomycetes</taxon>
        <taxon>Schizosaccharomycetales</taxon>
        <taxon>Schizosaccharomycetaceae</taxon>
        <taxon>Schizosaccharomyces</taxon>
    </lineage>
</organism>
<name>MTQ1_SCHPO</name>
<gene>
    <name type="primary">mtq1</name>
    <name type="ORF">SPAC29B12.05c</name>
</gene>
<evidence type="ECO:0000250" key="1"/>
<evidence type="ECO:0000250" key="2">
    <source>
        <dbReference type="UniProtKB" id="P53944"/>
    </source>
</evidence>
<evidence type="ECO:0000305" key="3"/>
<accession>O14028</accession>
<sequence length="309" mass="35771">MRLPRITKFALYRENPCLLPLYHATRDPSLAKREWTWICKELKLLYPEISKHGLRKKIVNACQLRARNYPLQYILKSQPFGNIKIDCQQGVLIPRWETEEWVERVVDKLNRLERLKPLKILDLCTGSGCISSFVLANLRVPHTIEAVDVSKKALKLAVKNCDRAIAHGTVGKINFHQIDVLNEHERVESLLQTSHVLLCNPPYISDDDFAAQTDISVRKYEPKLALLAKNGGNEFYYKFSQYIKRMLQRNAKDFVPLSLIVFEIGSTHQAKIVKSLFDDTNWQANIEQDGAHQDRVVIITRKDRRLIDI</sequence>
<reference key="1">
    <citation type="journal article" date="2002" name="Nature">
        <title>The genome sequence of Schizosaccharomyces pombe.</title>
        <authorList>
            <person name="Wood V."/>
            <person name="Gwilliam R."/>
            <person name="Rajandream M.A."/>
            <person name="Lyne M.H."/>
            <person name="Lyne R."/>
            <person name="Stewart A."/>
            <person name="Sgouros J.G."/>
            <person name="Peat N."/>
            <person name="Hayles J."/>
            <person name="Baker S.G."/>
            <person name="Basham D."/>
            <person name="Bowman S."/>
            <person name="Brooks K."/>
            <person name="Brown D."/>
            <person name="Brown S."/>
            <person name="Chillingworth T."/>
            <person name="Churcher C.M."/>
            <person name="Collins M."/>
            <person name="Connor R."/>
            <person name="Cronin A."/>
            <person name="Davis P."/>
            <person name="Feltwell T."/>
            <person name="Fraser A."/>
            <person name="Gentles S."/>
            <person name="Goble A."/>
            <person name="Hamlin N."/>
            <person name="Harris D.E."/>
            <person name="Hidalgo J."/>
            <person name="Hodgson G."/>
            <person name="Holroyd S."/>
            <person name="Hornsby T."/>
            <person name="Howarth S."/>
            <person name="Huckle E.J."/>
            <person name="Hunt S."/>
            <person name="Jagels K."/>
            <person name="James K.D."/>
            <person name="Jones L."/>
            <person name="Jones M."/>
            <person name="Leather S."/>
            <person name="McDonald S."/>
            <person name="McLean J."/>
            <person name="Mooney P."/>
            <person name="Moule S."/>
            <person name="Mungall K.L."/>
            <person name="Murphy L.D."/>
            <person name="Niblett D."/>
            <person name="Odell C."/>
            <person name="Oliver K."/>
            <person name="O'Neil S."/>
            <person name="Pearson D."/>
            <person name="Quail M.A."/>
            <person name="Rabbinowitsch E."/>
            <person name="Rutherford K.M."/>
            <person name="Rutter S."/>
            <person name="Saunders D."/>
            <person name="Seeger K."/>
            <person name="Sharp S."/>
            <person name="Skelton J."/>
            <person name="Simmonds M.N."/>
            <person name="Squares R."/>
            <person name="Squares S."/>
            <person name="Stevens K."/>
            <person name="Taylor K."/>
            <person name="Taylor R.G."/>
            <person name="Tivey A."/>
            <person name="Walsh S.V."/>
            <person name="Warren T."/>
            <person name="Whitehead S."/>
            <person name="Woodward J.R."/>
            <person name="Volckaert G."/>
            <person name="Aert R."/>
            <person name="Robben J."/>
            <person name="Grymonprez B."/>
            <person name="Weltjens I."/>
            <person name="Vanstreels E."/>
            <person name="Rieger M."/>
            <person name="Schaefer M."/>
            <person name="Mueller-Auer S."/>
            <person name="Gabel C."/>
            <person name="Fuchs M."/>
            <person name="Duesterhoeft A."/>
            <person name="Fritzc C."/>
            <person name="Holzer E."/>
            <person name="Moestl D."/>
            <person name="Hilbert H."/>
            <person name="Borzym K."/>
            <person name="Langer I."/>
            <person name="Beck A."/>
            <person name="Lehrach H."/>
            <person name="Reinhardt R."/>
            <person name="Pohl T.M."/>
            <person name="Eger P."/>
            <person name="Zimmermann W."/>
            <person name="Wedler H."/>
            <person name="Wambutt R."/>
            <person name="Purnelle B."/>
            <person name="Goffeau A."/>
            <person name="Cadieu E."/>
            <person name="Dreano S."/>
            <person name="Gloux S."/>
            <person name="Lelaure V."/>
            <person name="Mottier S."/>
            <person name="Galibert F."/>
            <person name="Aves S.J."/>
            <person name="Xiang Z."/>
            <person name="Hunt C."/>
            <person name="Moore K."/>
            <person name="Hurst S.M."/>
            <person name="Lucas M."/>
            <person name="Rochet M."/>
            <person name="Gaillardin C."/>
            <person name="Tallada V.A."/>
            <person name="Garzon A."/>
            <person name="Thode G."/>
            <person name="Daga R.R."/>
            <person name="Cruzado L."/>
            <person name="Jimenez J."/>
            <person name="Sanchez M."/>
            <person name="del Rey F."/>
            <person name="Benito J."/>
            <person name="Dominguez A."/>
            <person name="Revuelta J.L."/>
            <person name="Moreno S."/>
            <person name="Armstrong J."/>
            <person name="Forsburg S.L."/>
            <person name="Cerutti L."/>
            <person name="Lowe T."/>
            <person name="McCombie W.R."/>
            <person name="Paulsen I."/>
            <person name="Potashkin J."/>
            <person name="Shpakovski G.V."/>
            <person name="Ussery D."/>
            <person name="Barrell B.G."/>
            <person name="Nurse P."/>
        </authorList>
    </citation>
    <scope>NUCLEOTIDE SEQUENCE [LARGE SCALE GENOMIC DNA]</scope>
    <source>
        <strain>972 / ATCC 24843</strain>
    </source>
</reference>
<proteinExistence type="inferred from homology"/>
<keyword id="KW-0489">Methyltransferase</keyword>
<keyword id="KW-0496">Mitochondrion</keyword>
<keyword id="KW-1185">Reference proteome</keyword>
<keyword id="KW-0949">S-adenosyl-L-methionine</keyword>
<keyword id="KW-0808">Transferase</keyword>
<comment type="function">
    <text evidence="2">Methylates MRF1 on 'Gln-270' using S-adenosyl L-methionine as methyl donor.</text>
</comment>
<comment type="catalytic activity">
    <reaction evidence="2">
        <text>L-glutaminyl-[peptide chain release factor] + S-adenosyl-L-methionine = N(5)-methyl-L-glutaminyl-[peptide chain release factor] + S-adenosyl-L-homocysteine + H(+)</text>
        <dbReference type="Rhea" id="RHEA:42896"/>
        <dbReference type="Rhea" id="RHEA-COMP:10271"/>
        <dbReference type="Rhea" id="RHEA-COMP:10272"/>
        <dbReference type="ChEBI" id="CHEBI:15378"/>
        <dbReference type="ChEBI" id="CHEBI:30011"/>
        <dbReference type="ChEBI" id="CHEBI:57856"/>
        <dbReference type="ChEBI" id="CHEBI:59789"/>
        <dbReference type="ChEBI" id="CHEBI:61891"/>
        <dbReference type="EC" id="2.1.1.297"/>
    </reaction>
</comment>
<comment type="subcellular location">
    <subcellularLocation>
        <location evidence="2">Mitochondrion</location>
    </subcellularLocation>
</comment>
<comment type="similarity">
    <text evidence="3">Belongs to the protein N5-glutamine methyltransferase family.</text>
</comment>
<feature type="chain" id="PRO_0000353824" description="Probable MRF1 mitochondrial N(5)-glutamine methyltransferase mtq1">
    <location>
        <begin position="1"/>
        <end position="309"/>
    </location>
</feature>
<feature type="binding site" evidence="1">
    <location>
        <begin position="124"/>
        <end position="128"/>
    </location>
    <ligand>
        <name>S-adenosyl-L-methionine</name>
        <dbReference type="ChEBI" id="CHEBI:59789"/>
    </ligand>
</feature>
<feature type="binding site" evidence="1">
    <location>
        <position position="148"/>
    </location>
    <ligand>
        <name>S-adenosyl-L-methionine</name>
        <dbReference type="ChEBI" id="CHEBI:59789"/>
    </ligand>
</feature>
<feature type="binding site" evidence="1">
    <location>
        <begin position="200"/>
        <end position="203"/>
    </location>
    <ligand>
        <name>substrate</name>
    </ligand>
</feature>
<feature type="binding site" evidence="1">
    <location>
        <position position="200"/>
    </location>
    <ligand>
        <name>S-adenosyl-L-methionine</name>
        <dbReference type="ChEBI" id="CHEBI:59789"/>
    </ligand>
</feature>